<proteinExistence type="evidence at protein level"/>
<reference key="1">
    <citation type="journal article" date="2004" name="Nucleic Acids Res.">
        <title>Thermoadaptation trait revealed by the genome sequence of thermophilic Geobacillus kaustophilus.</title>
        <authorList>
            <person name="Takami H."/>
            <person name="Takaki Y."/>
            <person name="Chee G.-J."/>
            <person name="Nishi S."/>
            <person name="Shimamura S."/>
            <person name="Suzuki H."/>
            <person name="Matsui S."/>
            <person name="Uchiyama I."/>
        </authorList>
    </citation>
    <scope>NUCLEOTIDE SEQUENCE [LARGE SCALE GENOMIC DNA]</scope>
    <source>
        <strain>HTA426</strain>
    </source>
</reference>
<reference key="2">
    <citation type="journal article" date="2010" name="J. Biol. Chem.">
        <title>IcmF is a fusion between the radical B12 enzyme isobutyryl-CoA mutase and its G-protein chaperone.</title>
        <authorList>
            <person name="Cracan V."/>
            <person name="Padovani D."/>
            <person name="Banerjee R."/>
        </authorList>
    </citation>
    <scope>FUNCTION</scope>
    <scope>CATALYTIC ACTIVITY</scope>
    <scope>BIOPHYSICOCHEMICAL PROPERTIES</scope>
    <scope>COFACTOR</scope>
    <scope>SUBUNIT</scope>
    <scope>DOMAIN</scope>
</reference>
<reference key="3">
    <citation type="journal article" date="2012" name="J. Biol. Chem.">
        <title>Novel coenzyme B12-dependent interconversion of isovaleryl-CoA and pivalyl-CoA.</title>
        <authorList>
            <person name="Cracan V."/>
            <person name="Banerjee R."/>
        </authorList>
    </citation>
    <scope>FUNCTION</scope>
    <scope>CATALYTIC ACTIVITY</scope>
    <scope>BIOPHYSICOCHEMICAL PROPERTIES</scope>
    <scope>SUBSTRATE SPECIFICITY</scope>
    <scope>COFACTOR</scope>
    <scope>MUTAGENESIS OF LYS-213</scope>
</reference>
<evidence type="ECO:0000255" key="1">
    <source>
        <dbReference type="HAMAP-Rule" id="MF_02050"/>
    </source>
</evidence>
<evidence type="ECO:0000269" key="2">
    <source>
    </source>
</evidence>
<evidence type="ECO:0000269" key="3">
    <source>
    </source>
</evidence>
<evidence type="ECO:0000303" key="4">
    <source>
    </source>
</evidence>
<evidence type="ECO:0000305" key="5"/>
<evidence type="ECO:0000312" key="6">
    <source>
        <dbReference type="EMBL" id="BAD77676.1"/>
    </source>
</evidence>
<gene>
    <name evidence="1 4" type="primary">icmF</name>
    <name evidence="6" type="ordered locus">GK3391</name>
</gene>
<dbReference type="EC" id="5.4.99.13" evidence="1 2 3"/>
<dbReference type="EC" id="3.6.5.-" evidence="1 2 3"/>
<dbReference type="EMBL" id="BA000043">
    <property type="protein sequence ID" value="BAD77676.1"/>
    <property type="molecule type" value="Genomic_DNA"/>
</dbReference>
<dbReference type="RefSeq" id="WP_011232858.1">
    <property type="nucleotide sequence ID" value="NC_006510.1"/>
</dbReference>
<dbReference type="SMR" id="Q5KUG0"/>
<dbReference type="STRING" id="235909.GK3391"/>
<dbReference type="KEGG" id="gka:GK3391"/>
<dbReference type="eggNOG" id="COG1703">
    <property type="taxonomic scope" value="Bacteria"/>
</dbReference>
<dbReference type="eggNOG" id="COG1884">
    <property type="taxonomic scope" value="Bacteria"/>
</dbReference>
<dbReference type="eggNOG" id="COG2185">
    <property type="taxonomic scope" value="Bacteria"/>
</dbReference>
<dbReference type="HOGENOM" id="CLU_009523_2_0_9"/>
<dbReference type="Proteomes" id="UP000001172">
    <property type="component" value="Chromosome"/>
</dbReference>
<dbReference type="GO" id="GO:0031419">
    <property type="term" value="F:cobalamin binding"/>
    <property type="evidence" value="ECO:0000314"/>
    <property type="project" value="UniProtKB"/>
</dbReference>
<dbReference type="GO" id="GO:0005525">
    <property type="term" value="F:GTP binding"/>
    <property type="evidence" value="ECO:0000314"/>
    <property type="project" value="UniProtKB"/>
</dbReference>
<dbReference type="GO" id="GO:0003924">
    <property type="term" value="F:GTPase activity"/>
    <property type="evidence" value="ECO:0000314"/>
    <property type="project" value="UniProtKB"/>
</dbReference>
<dbReference type="GO" id="GO:0047727">
    <property type="term" value="F:isobutyryl-CoA mutase activity"/>
    <property type="evidence" value="ECO:0000314"/>
    <property type="project" value="UniProtKB"/>
</dbReference>
<dbReference type="GO" id="GO:0000287">
    <property type="term" value="F:magnesium ion binding"/>
    <property type="evidence" value="ECO:0007669"/>
    <property type="project" value="UniProtKB-UniRule"/>
</dbReference>
<dbReference type="GO" id="GO:0034784">
    <property type="term" value="F:pivalyl-CoA mutase activity"/>
    <property type="evidence" value="ECO:0000314"/>
    <property type="project" value="UniProtKB"/>
</dbReference>
<dbReference type="GO" id="GO:0042803">
    <property type="term" value="F:protein homodimerization activity"/>
    <property type="evidence" value="ECO:0000314"/>
    <property type="project" value="UniProtKB"/>
</dbReference>
<dbReference type="GO" id="GO:0006637">
    <property type="term" value="P:acyl-CoA metabolic process"/>
    <property type="evidence" value="ECO:0000314"/>
    <property type="project" value="UniProtKB"/>
</dbReference>
<dbReference type="CDD" id="cd02071">
    <property type="entry name" value="MM_CoA_mut_B12_BD"/>
    <property type="match status" value="1"/>
</dbReference>
<dbReference type="FunFam" id="3.20.20.240:FF:000003">
    <property type="entry name" value="Fused isobutyryl-CoA mutase"/>
    <property type="match status" value="1"/>
</dbReference>
<dbReference type="FunFam" id="3.40.50.280:FF:000005">
    <property type="entry name" value="Fused isobutyryl-CoA mutase"/>
    <property type="match status" value="1"/>
</dbReference>
<dbReference type="FunFam" id="3.40.50.300:FF:001512">
    <property type="entry name" value="Fused isobutyryl-CoA mutase"/>
    <property type="match status" value="1"/>
</dbReference>
<dbReference type="Gene3D" id="3.40.50.280">
    <property type="entry name" value="Cobalamin-binding domain"/>
    <property type="match status" value="1"/>
</dbReference>
<dbReference type="Gene3D" id="3.20.20.240">
    <property type="entry name" value="Methylmalonyl-CoA mutase"/>
    <property type="match status" value="1"/>
</dbReference>
<dbReference type="Gene3D" id="3.40.50.300">
    <property type="entry name" value="P-loop containing nucleotide triphosphate hydrolases"/>
    <property type="match status" value="1"/>
</dbReference>
<dbReference type="HAMAP" id="MF_02050">
    <property type="entry name" value="IcmF"/>
    <property type="match status" value="1"/>
</dbReference>
<dbReference type="InterPro" id="IPR006159">
    <property type="entry name" value="Acid_CoA_mut_C"/>
</dbReference>
<dbReference type="InterPro" id="IPR016176">
    <property type="entry name" value="Cbl-dep_enz_cat"/>
</dbReference>
<dbReference type="InterPro" id="IPR006158">
    <property type="entry name" value="Cobalamin-bd"/>
</dbReference>
<dbReference type="InterPro" id="IPR036724">
    <property type="entry name" value="Cobalamin-bd_sf"/>
</dbReference>
<dbReference type="InterPro" id="IPR052040">
    <property type="entry name" value="GTPase/Isobutyryl-CoA_mutase"/>
</dbReference>
<dbReference type="InterPro" id="IPR033669">
    <property type="entry name" value="IcmF"/>
</dbReference>
<dbReference type="InterPro" id="IPR053439">
    <property type="entry name" value="IcmF/GTPase_domain"/>
</dbReference>
<dbReference type="InterPro" id="IPR006099">
    <property type="entry name" value="MeMalonylCoA_mutase_a/b_cat"/>
</dbReference>
<dbReference type="InterPro" id="IPR027417">
    <property type="entry name" value="P-loop_NTPase"/>
</dbReference>
<dbReference type="NCBIfam" id="TIGR00640">
    <property type="entry name" value="acid_CoA_mut_C"/>
    <property type="match status" value="1"/>
</dbReference>
<dbReference type="NCBIfam" id="NF045497">
    <property type="entry name" value="IsobCoAmut_IcmF"/>
    <property type="match status" value="1"/>
</dbReference>
<dbReference type="PANTHER" id="PTHR43087:SF1">
    <property type="entry name" value="LAO_AO TRANSPORT SYSTEM ATPASE"/>
    <property type="match status" value="1"/>
</dbReference>
<dbReference type="PANTHER" id="PTHR43087">
    <property type="entry name" value="LYSINE/ARGININE/ORNITHINE TRANSPORT SYSTEM KINASE"/>
    <property type="match status" value="1"/>
</dbReference>
<dbReference type="Pfam" id="PF02310">
    <property type="entry name" value="B12-binding"/>
    <property type="match status" value="1"/>
</dbReference>
<dbReference type="Pfam" id="PF03308">
    <property type="entry name" value="MeaB"/>
    <property type="match status" value="1"/>
</dbReference>
<dbReference type="Pfam" id="PF01642">
    <property type="entry name" value="MM_CoA_mutase"/>
    <property type="match status" value="1"/>
</dbReference>
<dbReference type="SUPFAM" id="SSF52242">
    <property type="entry name" value="Cobalamin (vitamin B12)-binding domain"/>
    <property type="match status" value="1"/>
</dbReference>
<dbReference type="SUPFAM" id="SSF51703">
    <property type="entry name" value="Cobalamin (vitamin B12)-dependent enzymes"/>
    <property type="match status" value="1"/>
</dbReference>
<dbReference type="SUPFAM" id="SSF52540">
    <property type="entry name" value="P-loop containing nucleoside triphosphate hydrolases"/>
    <property type="match status" value="1"/>
</dbReference>
<dbReference type="PROSITE" id="PS51332">
    <property type="entry name" value="B12_BINDING"/>
    <property type="match status" value="1"/>
</dbReference>
<accession>Q5KUG0</accession>
<sequence>MAHIYRPKHHVRFVTASSLFDGHDASINIMRRILQASGAEVIHLGHNRSVEEIVNAAIQEDVQGIAVSSYQGGHMEFFKYMYDLLQERGASHIRIYGGGGGVIIPREIKELHEYGIARIFSPEDGRRLGLQGMINVMLEECDFPTVTVVTDELERLPSGDVQAIARLITLCEYRAEGENKEAAAAAEAAIEQVKALEKRVPVLGITGTGGAGKSSLTDELVRRFLNEIPDIKIAILSVDPTKQKTGGALLGDRIRMNSINSPRVYMRSLATRHSRTELSPAIRDAISVVKAAGFDLVIIETSGIGQGDAAITEVCDVSMYVMTSEFGAPTQLEKIDMIDYADLIVINKFERKGSEDAKRQVQKQYQRSHQLFDRDVSEMPVYGTIASQFNDPGTNTLFVALVDTINKKAGTNWKTSLKTVANVEKHNVIIPNERRYYLREIAETVRSYHRRAEQQVEVARRLFQIEGAIEAAKERGEAEDVIRALETLKADYEAKLTPESKRILATWEETKAKYAAKQFVTKVRDKEIVTELTTKTLSGLDIPKVVLPKFKDYGEILRWVYKENVPGSFPYTAGVFPFKRQGEDPKRQFAGEGTPERTNRRFHYLCKEDKAKRLSTAFDSVTLYGEDPDYRPDIFGKVGESGVSVCTLDDMKKLYKGFDLCDPLTSVSMTINGPAPILLAMFMNTAIDQQVEKKEAELGRPLTPEEYEQVKEWTLQTVRGTVQADILKEDQGQNTCIFSTDFALKMMGDIQEYFIKHRVRNYYSVSISGYHIAEAGANPITQLAFTLANGFTYVEYYLSRGMHIDDFAPNLSFFFSNGLDPEYSVIGRVARRIWAIVMREKYGANERSQKLKYHIQTSGRSLHAQEIDFNDIRTTLQALLAIYDNCNSLHTNAYDEAITTPTEESVRRAMAIQLIITKEFGLTKNENPLQGSFIIEELTDLVEEAVLQEFERLNDRGGVLGAMEMQYQRGKIQDESLYYETKKHTGELPIIGVNTFLNPNPPSEDELNNIQLARATYEEKETQIRNLREFQERNKDKAGPALERLKQVATSGGNIFEELMETVKVASLGQITRALYEVGGQYRRNM</sequence>
<protein>
    <recommendedName>
        <fullName evidence="1 4">Fused isobutyryl-CoA mutase</fullName>
    </recommendedName>
    <domain>
        <recommendedName>
            <fullName evidence="1 4">Isobutyryl-CoA mutase</fullName>
            <shortName evidence="1 4">ICM</shortName>
            <ecNumber evidence="1 2 3">5.4.99.13</ecNumber>
        </recommendedName>
    </domain>
    <domain>
        <recommendedName>
            <fullName evidence="1 4">P-loop GTPase</fullName>
            <ecNumber evidence="1 2 3">3.6.5.-</ecNumber>
        </recommendedName>
        <alternativeName>
            <fullName evidence="1 4">G-protein chaperone</fullName>
        </alternativeName>
    </domain>
</protein>
<organism>
    <name type="scientific">Geobacillus kaustophilus (strain HTA426)</name>
    <dbReference type="NCBI Taxonomy" id="235909"/>
    <lineage>
        <taxon>Bacteria</taxon>
        <taxon>Bacillati</taxon>
        <taxon>Bacillota</taxon>
        <taxon>Bacilli</taxon>
        <taxon>Bacillales</taxon>
        <taxon>Anoxybacillaceae</taxon>
        <taxon>Geobacillus</taxon>
        <taxon>Geobacillus thermoleovorans group</taxon>
    </lineage>
</organism>
<name>ICMF_GEOKA</name>
<comment type="function">
    <text evidence="2 3">Catalyzes the reversible interconversion of isobutyryl-CoA and n-butyryl-CoA, and to a lesser extent, of pivalyl-CoA and isovaleryl-CoA, using radical chemistry. Also exhibits GTPase activity, associated with its G-protein domain (MeaI) that functions as a chaperone that assists cofactor delivery and proper holo-enzyme assembly. Also displays ATPase activity. Is not able to convert 3-hydroxybutyryl-CoA to 2-hydroxyisobutyryl-CoA. Does not exhibit methylmalonyl-CoA mutase (MCM) activity.</text>
</comment>
<comment type="catalytic activity">
    <reaction evidence="1 2 3">
        <text>2-methylpropanoyl-CoA = butanoyl-CoA</text>
        <dbReference type="Rhea" id="RHEA:13141"/>
        <dbReference type="ChEBI" id="CHEBI:57338"/>
        <dbReference type="ChEBI" id="CHEBI:57371"/>
        <dbReference type="EC" id="5.4.99.13"/>
    </reaction>
</comment>
<comment type="catalytic activity">
    <reaction evidence="3">
        <text>3-methylbutanoyl-CoA = 2,2-dimethylpropanoyl-CoA</text>
        <dbReference type="Rhea" id="RHEA:52620"/>
        <dbReference type="ChEBI" id="CHEBI:57345"/>
        <dbReference type="ChEBI" id="CHEBI:136712"/>
    </reaction>
</comment>
<comment type="catalytic activity">
    <reaction evidence="1 2 3">
        <text>GTP + H2O = GDP + phosphate + H(+)</text>
        <dbReference type="Rhea" id="RHEA:19669"/>
        <dbReference type="ChEBI" id="CHEBI:15377"/>
        <dbReference type="ChEBI" id="CHEBI:15378"/>
        <dbReference type="ChEBI" id="CHEBI:37565"/>
        <dbReference type="ChEBI" id="CHEBI:43474"/>
        <dbReference type="ChEBI" id="CHEBI:58189"/>
    </reaction>
</comment>
<comment type="cofactor">
    <cofactor evidence="1 2 3">
        <name>adenosylcob(III)alamin</name>
        <dbReference type="ChEBI" id="CHEBI:18408"/>
    </cofactor>
</comment>
<comment type="cofactor">
    <cofactor evidence="1">
        <name>Mg(2+)</name>
        <dbReference type="ChEBI" id="CHEBI:18420"/>
    </cofactor>
</comment>
<comment type="biophysicochemical properties">
    <kinetics>
        <KM evidence="2">20.1 uM for isobutyryl-CoA (in the absence of nucleotides, at pH 7.5 and 37 degrees Celsius)</KM>
        <KM evidence="2">45.3 uM for isobutyryl-CoA (in the presence of GDP, at pH 7.5 and 37 degrees Celsius)</KM>
        <KM evidence="2">50.8 uM for isobutyryl-CoA (in the presence of GTP, at pH 7.5 and 37 degrees Celsius)</KM>
        <KM evidence="2 3">51 uM for GTP (at 37 degrees Celsius)</KM>
        <KM evidence="3">62 uM for isovaleryl-CoA (at 37 degrees Celsius)</KM>
        <KM evidence="3">1290 uM for ATP (at 37 degrees Celsius)</KM>
        <Vmax evidence="3">0.021 umol/min/mg enzyme for isovaleryl-CoA isomerization (at 37 degrees Celsius)</Vmax>
        <Vmax evidence="3">1.2 umol/min/mg enzyme for isobutyryl-CoA isomerization (at 37 degrees Celsius)</Vmax>
        <Vmax evidence="3">3.3 umol/min/mg enzyme for n-butyryl-CoA isomerization (at 37 degrees Celsius)</Vmax>
        <text evidence="2 3">kcat is 3.1 sec(-1) for ICM activity in the absence of nucleotides, at pH 7.5 and 37 degrees Celsius. Activity might be 4-fold higher at 60 degrees Celsius, the optimal growth temperature for this organism. kcat is 1.96 sec(-1) for ICM activity in the presence of GDP, at pH 7.5 and 37 degrees Celsius. kcat is 1.88 sec(-1) for ICM activity in the presence of GTP, at pH 7.5 and 37 degrees Celsius (PubMed:19864421). kcat is 10 min(-1) for GTPase activity and 19 min(-1) for ATPase activity (at 37 degrees Celsius) (PubMed:22167181).</text>
    </kinetics>
</comment>
<comment type="subunit">
    <text evidence="1 2">Homodimer.</text>
</comment>
<comment type="domain">
    <text evidence="1 2">Is composed of four functional domains: the N-terminal 5'-deoxyadenosylcobalamin binding region that is homologous to the small subunit of ICM (IcmB), a middle P-loop GTPase domain (MeaI) that likely acts as a chaperone for ICM, a structured linker region involved in dimer formation, and a C-terminal part that is homologous to the large substrate-binding subunit of ICM (IcmA).</text>
</comment>
<comment type="similarity">
    <text evidence="1 5">Belongs to the IcmF family.</text>
</comment>
<feature type="chain" id="PRO_0000434127" description="Fused isobutyryl-CoA mutase">
    <location>
        <begin position="1"/>
        <end position="1086"/>
    </location>
</feature>
<feature type="domain" description="B12-binding" evidence="1">
    <location>
        <begin position="10"/>
        <end position="140"/>
    </location>
</feature>
<feature type="region of interest" description="GTPase chaperone MeaI" evidence="1">
    <location>
        <begin position="153"/>
        <end position="407"/>
    </location>
</feature>
<feature type="region of interest" description="Linker" evidence="1">
    <location>
        <begin position="408"/>
        <end position="570"/>
    </location>
</feature>
<feature type="binding site" description="axial binding residue" evidence="1">
    <location>
        <position position="23"/>
    </location>
    <ligand>
        <name>adenosylcob(III)alamin</name>
        <dbReference type="ChEBI" id="CHEBI:18408"/>
    </ligand>
    <ligandPart>
        <name>Co</name>
        <dbReference type="ChEBI" id="CHEBI:27638"/>
    </ligandPart>
</feature>
<feature type="binding site" evidence="1">
    <location>
        <begin position="210"/>
        <end position="215"/>
    </location>
    <ligand>
        <name>GTP</name>
        <dbReference type="ChEBI" id="CHEBI:37565"/>
    </ligand>
</feature>
<feature type="binding site" evidence="1">
    <location>
        <position position="214"/>
    </location>
    <ligand>
        <name>Mg(2+)</name>
        <dbReference type="ChEBI" id="CHEBI:18420"/>
        <label>1</label>
        <note>catalytic</note>
    </ligand>
</feature>
<feature type="binding site" evidence="1">
    <location>
        <position position="238"/>
    </location>
    <ligand>
        <name>Mg(2+)</name>
        <dbReference type="ChEBI" id="CHEBI:18420"/>
        <label>2</label>
    </ligand>
</feature>
<feature type="binding site" evidence="1">
    <location>
        <position position="239"/>
    </location>
    <ligand>
        <name>Mg(2+)</name>
        <dbReference type="ChEBI" id="CHEBI:18420"/>
        <label>2</label>
    </ligand>
</feature>
<feature type="binding site" evidence="1">
    <location>
        <position position="252"/>
    </location>
    <ligand>
        <name>Mg(2+)</name>
        <dbReference type="ChEBI" id="CHEBI:18420"/>
        <label>1</label>
        <note>catalytic</note>
    </ligand>
</feature>
<feature type="binding site" evidence="1">
    <location>
        <position position="252"/>
    </location>
    <ligand>
        <name>Mg(2+)</name>
        <dbReference type="ChEBI" id="CHEBI:18420"/>
        <label>2</label>
    </ligand>
</feature>
<feature type="binding site" evidence="1">
    <location>
        <position position="255"/>
    </location>
    <ligand>
        <name>GTP</name>
        <dbReference type="ChEBI" id="CHEBI:37565"/>
    </ligand>
</feature>
<feature type="binding site" evidence="1">
    <location>
        <position position="300"/>
    </location>
    <ligand>
        <name>Mg(2+)</name>
        <dbReference type="ChEBI" id="CHEBI:18420"/>
        <label>1</label>
        <note>catalytic</note>
    </ligand>
</feature>
<feature type="binding site" evidence="1">
    <location>
        <position position="300"/>
    </location>
    <ligand>
        <name>Mg(2+)</name>
        <dbReference type="ChEBI" id="CHEBI:18420"/>
        <label>2</label>
    </ligand>
</feature>
<feature type="binding site" evidence="1">
    <location>
        <position position="301"/>
    </location>
    <ligand>
        <name>Mg(2+)</name>
        <dbReference type="ChEBI" id="CHEBI:18420"/>
        <label>2</label>
    </ligand>
</feature>
<feature type="binding site" evidence="1">
    <location>
        <begin position="347"/>
        <end position="350"/>
    </location>
    <ligand>
        <name>GTP</name>
        <dbReference type="ChEBI" id="CHEBI:37565"/>
    </ligand>
</feature>
<feature type="binding site" evidence="1">
    <location>
        <position position="578"/>
    </location>
    <ligand>
        <name>substrate</name>
    </ligand>
</feature>
<feature type="binding site" evidence="1">
    <location>
        <position position="613"/>
    </location>
    <ligand>
        <name>substrate</name>
    </ligand>
</feature>
<feature type="binding site" evidence="1">
    <location>
        <position position="719"/>
    </location>
    <ligand>
        <name>substrate</name>
    </ligand>
</feature>
<feature type="binding site" evidence="1">
    <location>
        <position position="763"/>
    </location>
    <ligand>
        <name>substrate</name>
    </ligand>
</feature>
<feature type="binding site" evidence="1">
    <location>
        <position position="812"/>
    </location>
    <ligand>
        <name>substrate</name>
    </ligand>
</feature>
<feature type="binding site" evidence="1">
    <location>
        <position position="847"/>
    </location>
    <ligand>
        <name>substrate</name>
    </ligand>
</feature>
<feature type="binding site" evidence="1">
    <location>
        <position position="852"/>
    </location>
    <ligand>
        <name>substrate</name>
    </ligand>
</feature>
<feature type="binding site" evidence="1">
    <location>
        <position position="964"/>
    </location>
    <ligand>
        <name>GTP</name>
        <dbReference type="ChEBI" id="CHEBI:37565"/>
    </ligand>
</feature>
<feature type="binding site" evidence="1">
    <location>
        <position position="1085"/>
    </location>
    <ligand>
        <name>GTP</name>
        <dbReference type="ChEBI" id="CHEBI:37565"/>
    </ligand>
</feature>
<feature type="mutagenesis site" description="Loss of GTPase and ATPase activities. No effect on the mutase activity." evidence="3">
    <original>K</original>
    <variation>A</variation>
    <location>
        <position position="213"/>
    </location>
</feature>
<keyword id="KW-0143">Chaperone</keyword>
<keyword id="KW-0846">Cobalamin</keyword>
<keyword id="KW-0170">Cobalt</keyword>
<keyword id="KW-0342">GTP-binding</keyword>
<keyword id="KW-0378">Hydrolase</keyword>
<keyword id="KW-0413">Isomerase</keyword>
<keyword id="KW-0460">Magnesium</keyword>
<keyword id="KW-0479">Metal-binding</keyword>
<keyword id="KW-0511">Multifunctional enzyme</keyword>
<keyword id="KW-0547">Nucleotide-binding</keyword>
<keyword id="KW-1185">Reference proteome</keyword>